<sequence length="132" mass="16015">MIRFILLQNRQGKTRLAKYYVPLEDSEKHKVEYEVHRLVVNRDPKFTNFVEFRTHKVIYRRYAGLFFSICVDITDNELAYLECIHLFVEILDHFFSNVCELDLVFNFHKVYRYLILDEFILAGELQETSKRQ</sequence>
<evidence type="ECO:0000269" key="1">
    <source>
    </source>
</evidence>
<evidence type="ECO:0000305" key="2"/>
<name>AP2S1_MAIZE</name>
<proteinExistence type="evidence at transcript level"/>
<keyword id="KW-1003">Cell membrane</keyword>
<keyword id="KW-0168">Coated pit</keyword>
<keyword id="KW-0254">Endocytosis</keyword>
<keyword id="KW-0472">Membrane</keyword>
<keyword id="KW-0653">Protein transport</keyword>
<keyword id="KW-1185">Reference proteome</keyword>
<keyword id="KW-0813">Transport</keyword>
<feature type="chain" id="PRO_0000193808" description="AP-2 complex subunit sigma">
    <location>
        <begin position="1"/>
        <end position="132"/>
    </location>
</feature>
<protein>
    <recommendedName>
        <fullName>AP-2 complex subunit sigma</fullName>
    </recommendedName>
    <alternativeName>
        <fullName>Clathrin assembly protein 2 sigma small chain</fullName>
    </alternativeName>
    <alternativeName>
        <fullName>Clathrin coat assembly protein AP17</fullName>
    </alternativeName>
    <alternativeName>
        <fullName>Clathrin coat-associated protein AP17</fullName>
    </alternativeName>
    <alternativeName>
        <fullName>Plasma membrane adaptor AP-2 17 kDa protein</fullName>
    </alternativeName>
    <alternativeName>
        <fullName>Sigma2-adaptin</fullName>
    </alternativeName>
</protein>
<dbReference type="EMBL" id="X96758">
    <property type="protein sequence ID" value="CAA65533.1"/>
    <property type="molecule type" value="Genomic_DNA"/>
</dbReference>
<dbReference type="PIR" id="T02991">
    <property type="entry name" value="T02991"/>
</dbReference>
<dbReference type="SMR" id="O50016"/>
<dbReference type="STRING" id="4577.O50016"/>
<dbReference type="PaxDb" id="4577-AC195874.2_FGP002"/>
<dbReference type="eggNOG" id="KOG0935">
    <property type="taxonomic scope" value="Eukaryota"/>
</dbReference>
<dbReference type="InParanoid" id="O50016"/>
<dbReference type="Proteomes" id="UP000007305">
    <property type="component" value="Unplaced"/>
</dbReference>
<dbReference type="ExpressionAtlas" id="O50016">
    <property type="expression patterns" value="baseline and differential"/>
</dbReference>
<dbReference type="GO" id="GO:0030122">
    <property type="term" value="C:AP-2 adaptor complex"/>
    <property type="evidence" value="ECO:0007669"/>
    <property type="project" value="InterPro"/>
</dbReference>
<dbReference type="GO" id="GO:0043231">
    <property type="term" value="C:intracellular membrane-bounded organelle"/>
    <property type="evidence" value="ECO:0000318"/>
    <property type="project" value="GO_Central"/>
</dbReference>
<dbReference type="GO" id="GO:0035615">
    <property type="term" value="F:clathrin adaptor activity"/>
    <property type="evidence" value="ECO:0007669"/>
    <property type="project" value="InterPro"/>
</dbReference>
<dbReference type="GO" id="GO:0072583">
    <property type="term" value="P:clathrin-dependent endocytosis"/>
    <property type="evidence" value="ECO:0007669"/>
    <property type="project" value="InterPro"/>
</dbReference>
<dbReference type="GO" id="GO:0015031">
    <property type="term" value="P:protein transport"/>
    <property type="evidence" value="ECO:0007669"/>
    <property type="project" value="UniProtKB-KW"/>
</dbReference>
<dbReference type="GO" id="GO:0016192">
    <property type="term" value="P:vesicle-mediated transport"/>
    <property type="evidence" value="ECO:0000318"/>
    <property type="project" value="GO_Central"/>
</dbReference>
<dbReference type="CDD" id="cd14833">
    <property type="entry name" value="AP2_sigma"/>
    <property type="match status" value="1"/>
</dbReference>
<dbReference type="FunFam" id="3.30.450.60:FF:000004">
    <property type="entry name" value="AP complex subunit sigma"/>
    <property type="match status" value="1"/>
</dbReference>
<dbReference type="Gene3D" id="3.30.450.60">
    <property type="match status" value="1"/>
</dbReference>
<dbReference type="InterPro" id="IPR016635">
    <property type="entry name" value="AP_complex_ssu"/>
</dbReference>
<dbReference type="InterPro" id="IPR022775">
    <property type="entry name" value="AP_mu_sigma_su"/>
</dbReference>
<dbReference type="InterPro" id="IPR027156">
    <property type="entry name" value="APS2"/>
</dbReference>
<dbReference type="InterPro" id="IPR011012">
    <property type="entry name" value="Longin-like_dom_sf"/>
</dbReference>
<dbReference type="PANTHER" id="PTHR11753">
    <property type="entry name" value="ADAPTOR COMPLEXES SMALL SUBUNIT FAMILY"/>
    <property type="match status" value="1"/>
</dbReference>
<dbReference type="Pfam" id="PF01217">
    <property type="entry name" value="Clat_adaptor_s"/>
    <property type="match status" value="1"/>
</dbReference>
<dbReference type="PIRSF" id="PIRSF015588">
    <property type="entry name" value="AP_complex_sigma"/>
    <property type="match status" value="1"/>
</dbReference>
<dbReference type="SUPFAM" id="SSF64356">
    <property type="entry name" value="SNARE-like"/>
    <property type="match status" value="1"/>
</dbReference>
<accession>O50016</accession>
<organism>
    <name type="scientific">Zea mays</name>
    <name type="common">Maize</name>
    <dbReference type="NCBI Taxonomy" id="4577"/>
    <lineage>
        <taxon>Eukaryota</taxon>
        <taxon>Viridiplantae</taxon>
        <taxon>Streptophyta</taxon>
        <taxon>Embryophyta</taxon>
        <taxon>Tracheophyta</taxon>
        <taxon>Spermatophyta</taxon>
        <taxon>Magnoliopsida</taxon>
        <taxon>Liliopsida</taxon>
        <taxon>Poales</taxon>
        <taxon>Poaceae</taxon>
        <taxon>PACMAD clade</taxon>
        <taxon>Panicoideae</taxon>
        <taxon>Andropogonodae</taxon>
        <taxon>Andropogoneae</taxon>
        <taxon>Tripsacinae</taxon>
        <taxon>Zea</taxon>
    </lineage>
</organism>
<comment type="function">
    <text>Component of the adaptor complexes which link clathrin to receptors in coated vesicles. Clathrin-associated protein complexes are believed to interact with the cytoplasmic tails of membrane proteins, leading to their selection and concentration. AP2S1/AP17 is a subunit of the plasma membrane adaptor. The complex binds polyphosphoinositides.</text>
</comment>
<comment type="subunit">
    <text>Adaptor protein complex 2 (AP-2) is a heterotetramer composed of two large adaptins (alpha-type and beta-type subunits), a medium adaptin (mu-type subunit AP50) and a small adaptin (sigma-type subunit AP17).</text>
</comment>
<comment type="subcellular location">
    <subcellularLocation>
        <location>Cell membrane</location>
    </subcellularLocation>
    <subcellularLocation>
        <location>Membrane</location>
        <location>Coated pit</location>
        <topology>Peripheral membrane protein</topology>
        <orientation>Cytoplasmic side</orientation>
    </subcellularLocation>
    <text>Component of the coat surrounding the cytoplasmic face of coated vesicles in the plasma membrane.</text>
</comment>
<comment type="tissue specificity">
    <text evidence="1">Widely expressed in the embryo, endosperm, leaf and root.</text>
</comment>
<comment type="similarity">
    <text evidence="2">Belongs to the adaptor complexes small subunit family.</text>
</comment>
<reference key="1">
    <citation type="journal article" date="1998" name="Gene">
        <title>Characterization of the sequence coding for the clathrin coat assembly protein AP17 (sigma2) associated with the plasma membrane from Zea mays and constitutive expression of its gene.</title>
        <authorList>
            <person name="Roca R."/>
            <person name="Stiefel V."/>
            <person name="Puigdomenech P."/>
        </authorList>
    </citation>
    <scope>NUCLEOTIDE SEQUENCE [GENOMIC DNA]</scope>
    <scope>TISSUE SPECIFICITY</scope>
    <source>
        <strain>cv. Wisconsin 64</strain>
        <tissue>Embryo</tissue>
    </source>
</reference>
<gene>
    <name type="primary">AP-17</name>
</gene>